<sequence>MPRRRVAAKRDVLDDPKYGSQILAKFMNHVMESGKKAVAERIVYGALEKVKERKNSDPLEIFEKALDAIAPLVEVKSRRVGGATYQVPVEVRPSRRNALAMRWLVDFARKRGEKSMALRLAGELMDAAEGKGAAVKKREDVHRMAEANKAFSHYRF</sequence>
<organism>
    <name type="scientific">Pseudomonas syringae pv. syringae (strain B728a)</name>
    <dbReference type="NCBI Taxonomy" id="205918"/>
    <lineage>
        <taxon>Bacteria</taxon>
        <taxon>Pseudomonadati</taxon>
        <taxon>Pseudomonadota</taxon>
        <taxon>Gammaproteobacteria</taxon>
        <taxon>Pseudomonadales</taxon>
        <taxon>Pseudomonadaceae</taxon>
        <taxon>Pseudomonas</taxon>
        <taxon>Pseudomonas syringae</taxon>
    </lineage>
</organism>
<feature type="chain" id="PRO_0000226520" description="Small ribosomal subunit protein uS7">
    <location>
        <begin position="1"/>
        <end position="156"/>
    </location>
</feature>
<dbReference type="EMBL" id="CP000075">
    <property type="protein sequence ID" value="AAY39582.1"/>
    <property type="molecule type" value="Genomic_DNA"/>
</dbReference>
<dbReference type="RefSeq" id="WP_003400433.1">
    <property type="nucleotide sequence ID" value="NC_007005.1"/>
</dbReference>
<dbReference type="RefSeq" id="YP_237620.1">
    <property type="nucleotide sequence ID" value="NC_007005.1"/>
</dbReference>
<dbReference type="SMR" id="Q4ZMP0"/>
<dbReference type="STRING" id="205918.Psyr_4552"/>
<dbReference type="KEGG" id="psb:Psyr_4552"/>
<dbReference type="PATRIC" id="fig|205918.7.peg.4691"/>
<dbReference type="eggNOG" id="COG0049">
    <property type="taxonomic scope" value="Bacteria"/>
</dbReference>
<dbReference type="HOGENOM" id="CLU_072226_1_1_6"/>
<dbReference type="OrthoDB" id="9807653at2"/>
<dbReference type="Proteomes" id="UP000000426">
    <property type="component" value="Chromosome"/>
</dbReference>
<dbReference type="GO" id="GO:0015935">
    <property type="term" value="C:small ribosomal subunit"/>
    <property type="evidence" value="ECO:0007669"/>
    <property type="project" value="InterPro"/>
</dbReference>
<dbReference type="GO" id="GO:0019843">
    <property type="term" value="F:rRNA binding"/>
    <property type="evidence" value="ECO:0007669"/>
    <property type="project" value="UniProtKB-UniRule"/>
</dbReference>
<dbReference type="GO" id="GO:0003735">
    <property type="term" value="F:structural constituent of ribosome"/>
    <property type="evidence" value="ECO:0007669"/>
    <property type="project" value="InterPro"/>
</dbReference>
<dbReference type="GO" id="GO:0000049">
    <property type="term" value="F:tRNA binding"/>
    <property type="evidence" value="ECO:0007669"/>
    <property type="project" value="UniProtKB-UniRule"/>
</dbReference>
<dbReference type="GO" id="GO:0006412">
    <property type="term" value="P:translation"/>
    <property type="evidence" value="ECO:0007669"/>
    <property type="project" value="UniProtKB-UniRule"/>
</dbReference>
<dbReference type="CDD" id="cd14869">
    <property type="entry name" value="uS7_Bacteria"/>
    <property type="match status" value="1"/>
</dbReference>
<dbReference type="FunFam" id="1.10.455.10:FF:000001">
    <property type="entry name" value="30S ribosomal protein S7"/>
    <property type="match status" value="1"/>
</dbReference>
<dbReference type="Gene3D" id="1.10.455.10">
    <property type="entry name" value="Ribosomal protein S7 domain"/>
    <property type="match status" value="1"/>
</dbReference>
<dbReference type="HAMAP" id="MF_00480_B">
    <property type="entry name" value="Ribosomal_uS7_B"/>
    <property type="match status" value="1"/>
</dbReference>
<dbReference type="InterPro" id="IPR000235">
    <property type="entry name" value="Ribosomal_uS7"/>
</dbReference>
<dbReference type="InterPro" id="IPR005717">
    <property type="entry name" value="Ribosomal_uS7_bac/org-type"/>
</dbReference>
<dbReference type="InterPro" id="IPR020606">
    <property type="entry name" value="Ribosomal_uS7_CS"/>
</dbReference>
<dbReference type="InterPro" id="IPR023798">
    <property type="entry name" value="Ribosomal_uS7_dom"/>
</dbReference>
<dbReference type="InterPro" id="IPR036823">
    <property type="entry name" value="Ribosomal_uS7_dom_sf"/>
</dbReference>
<dbReference type="NCBIfam" id="TIGR01029">
    <property type="entry name" value="rpsG_bact"/>
    <property type="match status" value="1"/>
</dbReference>
<dbReference type="PANTHER" id="PTHR11205">
    <property type="entry name" value="RIBOSOMAL PROTEIN S7"/>
    <property type="match status" value="1"/>
</dbReference>
<dbReference type="Pfam" id="PF00177">
    <property type="entry name" value="Ribosomal_S7"/>
    <property type="match status" value="1"/>
</dbReference>
<dbReference type="PIRSF" id="PIRSF002122">
    <property type="entry name" value="RPS7p_RPS7a_RPS5e_RPS7o"/>
    <property type="match status" value="1"/>
</dbReference>
<dbReference type="SUPFAM" id="SSF47973">
    <property type="entry name" value="Ribosomal protein S7"/>
    <property type="match status" value="1"/>
</dbReference>
<dbReference type="PROSITE" id="PS00052">
    <property type="entry name" value="RIBOSOMAL_S7"/>
    <property type="match status" value="1"/>
</dbReference>
<keyword id="KW-0687">Ribonucleoprotein</keyword>
<keyword id="KW-0689">Ribosomal protein</keyword>
<keyword id="KW-0694">RNA-binding</keyword>
<keyword id="KW-0699">rRNA-binding</keyword>
<keyword id="KW-0820">tRNA-binding</keyword>
<name>RS7_PSEU2</name>
<gene>
    <name evidence="1" type="primary">rpsG</name>
    <name type="ordered locus">Psyr_4552</name>
</gene>
<evidence type="ECO:0000255" key="1">
    <source>
        <dbReference type="HAMAP-Rule" id="MF_00480"/>
    </source>
</evidence>
<evidence type="ECO:0000305" key="2"/>
<comment type="function">
    <text evidence="1">One of the primary rRNA binding proteins, it binds directly to 16S rRNA where it nucleates assembly of the head domain of the 30S subunit. Is located at the subunit interface close to the decoding center, probably blocks exit of the E-site tRNA.</text>
</comment>
<comment type="subunit">
    <text evidence="1">Part of the 30S ribosomal subunit. Contacts proteins S9 and S11.</text>
</comment>
<comment type="similarity">
    <text evidence="1">Belongs to the universal ribosomal protein uS7 family.</text>
</comment>
<proteinExistence type="inferred from homology"/>
<reference key="1">
    <citation type="journal article" date="2005" name="Proc. Natl. Acad. Sci. U.S.A.">
        <title>Comparison of the complete genome sequences of Pseudomonas syringae pv. syringae B728a and pv. tomato DC3000.</title>
        <authorList>
            <person name="Feil H."/>
            <person name="Feil W.S."/>
            <person name="Chain P."/>
            <person name="Larimer F."/>
            <person name="Dibartolo G."/>
            <person name="Copeland A."/>
            <person name="Lykidis A."/>
            <person name="Trong S."/>
            <person name="Nolan M."/>
            <person name="Goltsman E."/>
            <person name="Thiel J."/>
            <person name="Malfatti S."/>
            <person name="Loper J.E."/>
            <person name="Lapidus A."/>
            <person name="Detter J.C."/>
            <person name="Land M."/>
            <person name="Richardson P.M."/>
            <person name="Kyrpides N.C."/>
            <person name="Ivanova N."/>
            <person name="Lindow S.E."/>
        </authorList>
    </citation>
    <scope>NUCLEOTIDE SEQUENCE [LARGE SCALE GENOMIC DNA]</scope>
    <source>
        <strain>B728a</strain>
    </source>
</reference>
<protein>
    <recommendedName>
        <fullName evidence="1">Small ribosomal subunit protein uS7</fullName>
    </recommendedName>
    <alternativeName>
        <fullName evidence="2">30S ribosomal protein S7</fullName>
    </alternativeName>
</protein>
<accession>Q4ZMP0</accession>